<accession>Q7SID6</accession>
<accession>Q1ZY04</accession>
<evidence type="ECO:0000250" key="1">
    <source>
        <dbReference type="UniProtKB" id="P00593"/>
    </source>
</evidence>
<evidence type="ECO:0000255" key="2">
    <source>
        <dbReference type="PROSITE-ProRule" id="PRU10035"/>
    </source>
</evidence>
<evidence type="ECO:0000255" key="3">
    <source>
        <dbReference type="PROSITE-ProRule" id="PRU10036"/>
    </source>
</evidence>
<evidence type="ECO:0000269" key="4">
    <source>
    </source>
</evidence>
<evidence type="ECO:0000269" key="5">
    <source>
    </source>
</evidence>
<evidence type="ECO:0000305" key="6"/>
<evidence type="ECO:0000305" key="7">
    <source>
    </source>
</evidence>
<evidence type="ECO:0000312" key="8">
    <source>
        <dbReference type="PDB" id="1IJL"/>
    </source>
</evidence>
<evidence type="ECO:0007744" key="9">
    <source>
        <dbReference type="PDB" id="1IJL"/>
    </source>
</evidence>
<evidence type="ECO:0007829" key="10">
    <source>
        <dbReference type="PDB" id="1IJL"/>
    </source>
</evidence>
<proteinExistence type="evidence at protein level"/>
<dbReference type="EC" id="3.1.1.4"/>
<dbReference type="EMBL" id="X77648">
    <property type="protein sequence ID" value="CAJ85790.1"/>
    <property type="molecule type" value="mRNA"/>
</dbReference>
<dbReference type="PDB" id="1IJL">
    <property type="method" value="X-ray"/>
    <property type="resolution" value="2.60 A"/>
    <property type="chains" value="A/B=1-123"/>
</dbReference>
<dbReference type="PDBsum" id="1IJL"/>
<dbReference type="SMR" id="Q7SID6"/>
<dbReference type="EvolutionaryTrace" id="Q7SID6"/>
<dbReference type="GO" id="GO:0005576">
    <property type="term" value="C:extracellular region"/>
    <property type="evidence" value="ECO:0007669"/>
    <property type="project" value="UniProtKB-SubCell"/>
</dbReference>
<dbReference type="GO" id="GO:0005509">
    <property type="term" value="F:calcium ion binding"/>
    <property type="evidence" value="ECO:0007669"/>
    <property type="project" value="InterPro"/>
</dbReference>
<dbReference type="GO" id="GO:0047498">
    <property type="term" value="F:calcium-dependent phospholipase A2 activity"/>
    <property type="evidence" value="ECO:0007669"/>
    <property type="project" value="TreeGrafter"/>
</dbReference>
<dbReference type="GO" id="GO:0005543">
    <property type="term" value="F:phospholipid binding"/>
    <property type="evidence" value="ECO:0007669"/>
    <property type="project" value="TreeGrafter"/>
</dbReference>
<dbReference type="GO" id="GO:0090729">
    <property type="term" value="F:toxin activity"/>
    <property type="evidence" value="ECO:0007669"/>
    <property type="project" value="UniProtKB-KW"/>
</dbReference>
<dbReference type="GO" id="GO:0050482">
    <property type="term" value="P:arachidonate secretion"/>
    <property type="evidence" value="ECO:0007669"/>
    <property type="project" value="InterPro"/>
</dbReference>
<dbReference type="GO" id="GO:0016042">
    <property type="term" value="P:lipid catabolic process"/>
    <property type="evidence" value="ECO:0007669"/>
    <property type="project" value="UniProtKB-KW"/>
</dbReference>
<dbReference type="GO" id="GO:0042130">
    <property type="term" value="P:negative regulation of T cell proliferation"/>
    <property type="evidence" value="ECO:0007669"/>
    <property type="project" value="TreeGrafter"/>
</dbReference>
<dbReference type="GO" id="GO:0006644">
    <property type="term" value="P:phospholipid metabolic process"/>
    <property type="evidence" value="ECO:0007669"/>
    <property type="project" value="InterPro"/>
</dbReference>
<dbReference type="CDD" id="cd00125">
    <property type="entry name" value="PLA2c"/>
    <property type="match status" value="1"/>
</dbReference>
<dbReference type="FunFam" id="1.20.90.10:FF:000001">
    <property type="entry name" value="Basic phospholipase A2 homolog"/>
    <property type="match status" value="1"/>
</dbReference>
<dbReference type="Gene3D" id="1.20.90.10">
    <property type="entry name" value="Phospholipase A2 domain"/>
    <property type="match status" value="1"/>
</dbReference>
<dbReference type="InterPro" id="IPR001211">
    <property type="entry name" value="PLipase_A2"/>
</dbReference>
<dbReference type="InterPro" id="IPR033112">
    <property type="entry name" value="PLipase_A2_Asp_AS"/>
</dbReference>
<dbReference type="InterPro" id="IPR016090">
    <property type="entry name" value="PLipase_A2_dom"/>
</dbReference>
<dbReference type="InterPro" id="IPR036444">
    <property type="entry name" value="PLipase_A2_dom_sf"/>
</dbReference>
<dbReference type="InterPro" id="IPR033113">
    <property type="entry name" value="PLipase_A2_His_AS"/>
</dbReference>
<dbReference type="PANTHER" id="PTHR11716">
    <property type="entry name" value="PHOSPHOLIPASE A2 FAMILY MEMBER"/>
    <property type="match status" value="1"/>
</dbReference>
<dbReference type="PANTHER" id="PTHR11716:SF9">
    <property type="entry name" value="PHOSPHOLIPASE A2, MEMBRANE ASSOCIATED"/>
    <property type="match status" value="1"/>
</dbReference>
<dbReference type="Pfam" id="PF00068">
    <property type="entry name" value="Phospholip_A2_1"/>
    <property type="match status" value="1"/>
</dbReference>
<dbReference type="PRINTS" id="PR00389">
    <property type="entry name" value="PHPHLIPASEA2"/>
</dbReference>
<dbReference type="SMART" id="SM00085">
    <property type="entry name" value="PA2c"/>
    <property type="match status" value="1"/>
</dbReference>
<dbReference type="SUPFAM" id="SSF48619">
    <property type="entry name" value="Phospholipase A2, PLA2"/>
    <property type="match status" value="1"/>
</dbReference>
<dbReference type="PROSITE" id="PS00119">
    <property type="entry name" value="PA2_ASP"/>
    <property type="match status" value="1"/>
</dbReference>
<dbReference type="PROSITE" id="PS00118">
    <property type="entry name" value="PA2_HIS"/>
    <property type="match status" value="1"/>
</dbReference>
<comment type="function">
    <text evidence="5">Snake venom phospholipase A2 (PLA2) that inhibits ADP-induced platelet aggregation. PLA2 catalyzes the calcium-dependent hydrolysis of the 2-acyl groups in 3-sn-phosphoglycerides.</text>
</comment>
<comment type="catalytic activity">
    <reaction evidence="1 2 3">
        <text>a 1,2-diacyl-sn-glycero-3-phosphocholine + H2O = a 1-acyl-sn-glycero-3-phosphocholine + a fatty acid + H(+)</text>
        <dbReference type="Rhea" id="RHEA:15801"/>
        <dbReference type="ChEBI" id="CHEBI:15377"/>
        <dbReference type="ChEBI" id="CHEBI:15378"/>
        <dbReference type="ChEBI" id="CHEBI:28868"/>
        <dbReference type="ChEBI" id="CHEBI:57643"/>
        <dbReference type="ChEBI" id="CHEBI:58168"/>
        <dbReference type="EC" id="3.1.1.4"/>
    </reaction>
</comment>
<comment type="cofactor">
    <cofactor evidence="4">
        <name>Ca(2+)</name>
        <dbReference type="ChEBI" id="CHEBI:29108"/>
    </cofactor>
    <text evidence="4">Binds 1 Ca(2+) ion per subunit.</text>
</comment>
<comment type="subunit">
    <text evidence="4">Homodimer.</text>
</comment>
<comment type="subcellular location">
    <subcellularLocation>
        <location evidence="5">Secreted</location>
    </subcellularLocation>
</comment>
<comment type="tissue specificity">
    <text evidence="5">Expressed by the venom gland.</text>
</comment>
<comment type="similarity">
    <text evidence="6">Belongs to the phospholipase A2 family. Group II subfamily. D49 sub-subfamily.</text>
</comment>
<protein>
    <recommendedName>
        <fullName>Acidic phospholipase A2</fullName>
        <shortName>svPLA2</shortName>
        <ecNumber>3.1.1.4</ecNumber>
    </recommendedName>
    <alternativeName>
        <fullName>Phosphatidylcholine 2-acylhydrolase</fullName>
    </alternativeName>
</protein>
<sequence length="123" mass="14032">SLIQFETLIMKVVKKSGMFWYSAYGCYCGWGGHGRPQDATDRCCFVHDCCYGKVTGCDPKMDSYTYSEENGDIVCGGDDPCKREICECDRVAAVCFRDNLDTYNSDTYWRYPTKNCQEEPDPC</sequence>
<reference evidence="6" key="1">
    <citation type="journal article" date="1996" name="Toxicon">
        <title>Molecular cloning and deduced primary structures of acidic and basic phospholipases A2 from the venom of Deinagkistrodon acutus.</title>
        <authorList>
            <person name="Wang Y.-M."/>
            <person name="Wang J.-H."/>
            <person name="Tsai I.-H."/>
        </authorList>
    </citation>
    <scope>NUCLEOTIDE SEQUENCE [MRNA]</scope>
    <scope>FUNCTION</scope>
    <scope>SUBCELLULAR LOCATION</scope>
    <scope>TISSUE SPECIFICITY</scope>
    <scope>VARIANTS PRO-39 AND SER-56</scope>
    <source>
        <tissue evidence="5">Venom gland</tissue>
    </source>
</reference>
<reference evidence="8" key="2">
    <citation type="journal article" date="2002" name="Acta Crystallogr. D">
        <title>Structure of an acidic phospholipase A2 from the venom of Deinagkistrodon acutus.</title>
        <authorList>
            <person name="Gu L."/>
            <person name="Zhang H."/>
            <person name="Song S."/>
            <person name="Zhou Y."/>
            <person name="Lin Z."/>
        </authorList>
    </citation>
    <scope>X-RAY CRYSTALLOGRAPHY (2.6 ANGSTROMS) OF 1-112 IN COMPLEX WITH CALCIUM ION</scope>
    <scope>COFACTOR</scope>
    <scope>SUBUNIT</scope>
    <scope>DISULFIDE BONDS</scope>
    <source>
        <tissue>Venom</tissue>
    </source>
</reference>
<keyword id="KW-0002">3D-structure</keyword>
<keyword id="KW-0106">Calcium</keyword>
<keyword id="KW-1015">Disulfide bond</keyword>
<keyword id="KW-1199">Hemostasis impairing toxin</keyword>
<keyword id="KW-0378">Hydrolase</keyword>
<keyword id="KW-0442">Lipid degradation</keyword>
<keyword id="KW-0443">Lipid metabolism</keyword>
<keyword id="KW-0479">Metal-binding</keyword>
<keyword id="KW-1201">Platelet aggregation inhibiting toxin</keyword>
<keyword id="KW-0964">Secreted</keyword>
<keyword id="KW-0800">Toxin</keyword>
<name>PA2A_DEIAC</name>
<feature type="chain" id="PRO_0000235854" description="Acidic phospholipase A2">
    <location>
        <begin position="1"/>
        <end position="123"/>
    </location>
</feature>
<feature type="active site" evidence="1">
    <location>
        <position position="47"/>
    </location>
</feature>
<feature type="active site" evidence="1">
    <location>
        <position position="89"/>
    </location>
</feature>
<feature type="binding site" evidence="4 9">
    <location>
        <position position="27"/>
    </location>
    <ligand>
        <name>Ca(2+)</name>
        <dbReference type="ChEBI" id="CHEBI:29108"/>
    </ligand>
</feature>
<feature type="binding site" evidence="4 9">
    <location>
        <position position="29"/>
    </location>
    <ligand>
        <name>Ca(2+)</name>
        <dbReference type="ChEBI" id="CHEBI:29108"/>
    </ligand>
</feature>
<feature type="binding site" evidence="4 9">
    <location>
        <position position="31"/>
    </location>
    <ligand>
        <name>Ca(2+)</name>
        <dbReference type="ChEBI" id="CHEBI:29108"/>
    </ligand>
</feature>
<feature type="binding site" evidence="4">
    <location>
        <position position="48"/>
    </location>
    <ligand>
        <name>Ca(2+)</name>
        <dbReference type="ChEBI" id="CHEBI:29108"/>
    </ligand>
</feature>
<feature type="disulfide bond" evidence="7">
    <location>
        <begin position="26"/>
        <end position="116"/>
    </location>
</feature>
<feature type="disulfide bond" evidence="4">
    <location>
        <begin position="28"/>
        <end position="44"/>
    </location>
</feature>
<feature type="disulfide bond" evidence="4">
    <location>
        <begin position="43"/>
        <end position="95"/>
    </location>
</feature>
<feature type="disulfide bond" evidence="7">
    <location>
        <begin position="49"/>
        <end position="123"/>
    </location>
</feature>
<feature type="disulfide bond" evidence="4">
    <location>
        <begin position="50"/>
        <end position="88"/>
    </location>
</feature>
<feature type="disulfide bond" evidence="4">
    <location>
        <begin position="57"/>
        <end position="81"/>
    </location>
</feature>
<feature type="disulfide bond" evidence="4">
    <location>
        <begin position="75"/>
        <end position="86"/>
    </location>
</feature>
<feature type="sequence variant" evidence="5">
    <original>A</original>
    <variation>P</variation>
    <location>
        <position position="39"/>
    </location>
</feature>
<feature type="sequence variant" evidence="5">
    <original>G</original>
    <variation>S</variation>
    <location>
        <position position="56"/>
    </location>
</feature>
<feature type="helix" evidence="10">
    <location>
        <begin position="2"/>
        <end position="12"/>
    </location>
</feature>
<feature type="helix" evidence="10">
    <location>
        <begin position="17"/>
        <end position="20"/>
    </location>
</feature>
<feature type="strand" evidence="10">
    <location>
        <begin position="21"/>
        <end position="24"/>
    </location>
</feature>
<feature type="turn" evidence="10">
    <location>
        <begin position="25"/>
        <end position="27"/>
    </location>
</feature>
<feature type="strand" evidence="10">
    <location>
        <begin position="28"/>
        <end position="31"/>
    </location>
</feature>
<feature type="helix" evidence="10">
    <location>
        <begin position="39"/>
        <end position="51"/>
    </location>
</feature>
<feature type="turn" evidence="10">
    <location>
        <begin position="59"/>
        <end position="61"/>
    </location>
</feature>
<feature type="strand" evidence="10">
    <location>
        <begin position="66"/>
        <end position="75"/>
    </location>
</feature>
<feature type="helix" evidence="10">
    <location>
        <begin position="80"/>
        <end position="98"/>
    </location>
</feature>
<feature type="helix" evidence="10">
    <location>
        <begin position="100"/>
        <end position="102"/>
    </location>
</feature>
<feature type="helix" evidence="10">
    <location>
        <begin position="105"/>
        <end position="108"/>
    </location>
</feature>
<feature type="helix" evidence="10">
    <location>
        <begin position="113"/>
        <end position="116"/>
    </location>
</feature>
<organism>
    <name type="scientific">Deinagkistrodon acutus</name>
    <name type="common">Hundred-pace snake</name>
    <name type="synonym">Agkistrodon acutus</name>
    <dbReference type="NCBI Taxonomy" id="36307"/>
    <lineage>
        <taxon>Eukaryota</taxon>
        <taxon>Metazoa</taxon>
        <taxon>Chordata</taxon>
        <taxon>Craniata</taxon>
        <taxon>Vertebrata</taxon>
        <taxon>Euteleostomi</taxon>
        <taxon>Lepidosauria</taxon>
        <taxon>Squamata</taxon>
        <taxon>Bifurcata</taxon>
        <taxon>Unidentata</taxon>
        <taxon>Episquamata</taxon>
        <taxon>Toxicofera</taxon>
        <taxon>Serpentes</taxon>
        <taxon>Colubroidea</taxon>
        <taxon>Viperidae</taxon>
        <taxon>Crotalinae</taxon>
        <taxon>Deinagkistrodon</taxon>
    </lineage>
</organism>